<reference key="1">
    <citation type="journal article" date="2008" name="Proc. Natl. Acad. Sci. U.S.A.">
        <title>Niche adaptation and genome expansion in the chlorophyll d-producing cyanobacterium Acaryochloris marina.</title>
        <authorList>
            <person name="Swingley W.D."/>
            <person name="Chen M."/>
            <person name="Cheung P.C."/>
            <person name="Conrad A.L."/>
            <person name="Dejesa L.C."/>
            <person name="Hao J."/>
            <person name="Honchak B.M."/>
            <person name="Karbach L.E."/>
            <person name="Kurdoglu A."/>
            <person name="Lahiri S."/>
            <person name="Mastrian S.D."/>
            <person name="Miyashita H."/>
            <person name="Page L."/>
            <person name="Ramakrishna P."/>
            <person name="Satoh S."/>
            <person name="Sattley W.M."/>
            <person name="Shimada Y."/>
            <person name="Taylor H.L."/>
            <person name="Tomo T."/>
            <person name="Tsuchiya T."/>
            <person name="Wang Z.T."/>
            <person name="Raymond J."/>
            <person name="Mimuro M."/>
            <person name="Blankenship R.E."/>
            <person name="Touchman J.W."/>
        </authorList>
    </citation>
    <scope>NUCLEOTIDE SEQUENCE [LARGE SCALE GENOMIC DNA]</scope>
    <source>
        <strain>MBIC 11017</strain>
    </source>
</reference>
<organism>
    <name type="scientific">Acaryochloris marina (strain MBIC 11017)</name>
    <dbReference type="NCBI Taxonomy" id="329726"/>
    <lineage>
        <taxon>Bacteria</taxon>
        <taxon>Bacillati</taxon>
        <taxon>Cyanobacteriota</taxon>
        <taxon>Cyanophyceae</taxon>
        <taxon>Acaryochloridales</taxon>
        <taxon>Acaryochloridaceae</taxon>
        <taxon>Acaryochloris</taxon>
    </lineage>
</organism>
<feature type="chain" id="PRO_0000336881" description="7-cyano-7-deazaguanine synthase">
    <location>
        <begin position="1"/>
        <end position="228"/>
    </location>
</feature>
<feature type="binding site" evidence="1">
    <location>
        <begin position="7"/>
        <end position="17"/>
    </location>
    <ligand>
        <name>ATP</name>
        <dbReference type="ChEBI" id="CHEBI:30616"/>
    </ligand>
</feature>
<feature type="binding site" evidence="1">
    <location>
        <position position="190"/>
    </location>
    <ligand>
        <name>Zn(2+)</name>
        <dbReference type="ChEBI" id="CHEBI:29105"/>
    </ligand>
</feature>
<feature type="binding site" evidence="1">
    <location>
        <position position="202"/>
    </location>
    <ligand>
        <name>Zn(2+)</name>
        <dbReference type="ChEBI" id="CHEBI:29105"/>
    </ligand>
</feature>
<feature type="binding site" evidence="1">
    <location>
        <position position="205"/>
    </location>
    <ligand>
        <name>Zn(2+)</name>
        <dbReference type="ChEBI" id="CHEBI:29105"/>
    </ligand>
</feature>
<feature type="binding site" evidence="1">
    <location>
        <position position="208"/>
    </location>
    <ligand>
        <name>Zn(2+)</name>
        <dbReference type="ChEBI" id="CHEBI:29105"/>
    </ligand>
</feature>
<comment type="function">
    <text evidence="1">Catalyzes the ATP-dependent conversion of 7-carboxy-7-deazaguanine (CDG) to 7-cyano-7-deazaguanine (preQ(0)).</text>
</comment>
<comment type="catalytic activity">
    <reaction evidence="1">
        <text>7-carboxy-7-deazaguanine + NH4(+) + ATP = 7-cyano-7-deazaguanine + ADP + phosphate + H2O + H(+)</text>
        <dbReference type="Rhea" id="RHEA:27982"/>
        <dbReference type="ChEBI" id="CHEBI:15377"/>
        <dbReference type="ChEBI" id="CHEBI:15378"/>
        <dbReference type="ChEBI" id="CHEBI:28938"/>
        <dbReference type="ChEBI" id="CHEBI:30616"/>
        <dbReference type="ChEBI" id="CHEBI:43474"/>
        <dbReference type="ChEBI" id="CHEBI:45075"/>
        <dbReference type="ChEBI" id="CHEBI:61036"/>
        <dbReference type="ChEBI" id="CHEBI:456216"/>
        <dbReference type="EC" id="6.3.4.20"/>
    </reaction>
</comment>
<comment type="cofactor">
    <cofactor evidence="1">
        <name>Zn(2+)</name>
        <dbReference type="ChEBI" id="CHEBI:29105"/>
    </cofactor>
    <text evidence="1">Binds 1 zinc ion per subunit.</text>
</comment>
<comment type="pathway">
    <text evidence="1">Purine metabolism; 7-cyano-7-deazaguanine biosynthesis.</text>
</comment>
<comment type="similarity">
    <text evidence="1">Belongs to the QueC family.</text>
</comment>
<evidence type="ECO:0000255" key="1">
    <source>
        <dbReference type="HAMAP-Rule" id="MF_01633"/>
    </source>
</evidence>
<protein>
    <recommendedName>
        <fullName evidence="1">7-cyano-7-deazaguanine synthase</fullName>
        <ecNumber evidence="1">6.3.4.20</ecNumber>
    </recommendedName>
    <alternativeName>
        <fullName evidence="1">7-cyano-7-carbaguanine synthase</fullName>
    </alternativeName>
    <alternativeName>
        <fullName evidence="1">PreQ(0) synthase</fullName>
    </alternativeName>
    <alternativeName>
        <fullName evidence="1">Queuosine biosynthesis protein QueC</fullName>
    </alternativeName>
</protein>
<gene>
    <name evidence="1" type="primary">queC</name>
    <name type="ordered locus">AM1_2344</name>
</gene>
<dbReference type="EC" id="6.3.4.20" evidence="1"/>
<dbReference type="EMBL" id="CP000828">
    <property type="protein sequence ID" value="ABW27354.1"/>
    <property type="molecule type" value="Genomic_DNA"/>
</dbReference>
<dbReference type="RefSeq" id="WP_012162828.1">
    <property type="nucleotide sequence ID" value="NC_009925.1"/>
</dbReference>
<dbReference type="SMR" id="B0C253"/>
<dbReference type="STRING" id="329726.AM1_2344"/>
<dbReference type="KEGG" id="amr:AM1_2344"/>
<dbReference type="eggNOG" id="COG0603">
    <property type="taxonomic scope" value="Bacteria"/>
</dbReference>
<dbReference type="HOGENOM" id="CLU_081854_1_0_3"/>
<dbReference type="OrthoDB" id="9789567at2"/>
<dbReference type="UniPathway" id="UPA00391"/>
<dbReference type="Proteomes" id="UP000000268">
    <property type="component" value="Chromosome"/>
</dbReference>
<dbReference type="GO" id="GO:0005524">
    <property type="term" value="F:ATP binding"/>
    <property type="evidence" value="ECO:0007669"/>
    <property type="project" value="UniProtKB-UniRule"/>
</dbReference>
<dbReference type="GO" id="GO:0016879">
    <property type="term" value="F:ligase activity, forming carbon-nitrogen bonds"/>
    <property type="evidence" value="ECO:0007669"/>
    <property type="project" value="UniProtKB-UniRule"/>
</dbReference>
<dbReference type="GO" id="GO:0008270">
    <property type="term" value="F:zinc ion binding"/>
    <property type="evidence" value="ECO:0007669"/>
    <property type="project" value="UniProtKB-UniRule"/>
</dbReference>
<dbReference type="GO" id="GO:0008616">
    <property type="term" value="P:queuosine biosynthetic process"/>
    <property type="evidence" value="ECO:0007669"/>
    <property type="project" value="UniProtKB-UniRule"/>
</dbReference>
<dbReference type="CDD" id="cd01995">
    <property type="entry name" value="QueC-like"/>
    <property type="match status" value="1"/>
</dbReference>
<dbReference type="Gene3D" id="3.40.50.620">
    <property type="entry name" value="HUPs"/>
    <property type="match status" value="1"/>
</dbReference>
<dbReference type="HAMAP" id="MF_01633">
    <property type="entry name" value="QueC"/>
    <property type="match status" value="1"/>
</dbReference>
<dbReference type="InterPro" id="IPR018317">
    <property type="entry name" value="QueC"/>
</dbReference>
<dbReference type="InterPro" id="IPR014729">
    <property type="entry name" value="Rossmann-like_a/b/a_fold"/>
</dbReference>
<dbReference type="NCBIfam" id="TIGR00364">
    <property type="entry name" value="7-cyano-7-deazaguanine synthase QueC"/>
    <property type="match status" value="1"/>
</dbReference>
<dbReference type="PANTHER" id="PTHR42914">
    <property type="entry name" value="7-CYANO-7-DEAZAGUANINE SYNTHASE"/>
    <property type="match status" value="1"/>
</dbReference>
<dbReference type="PANTHER" id="PTHR42914:SF1">
    <property type="entry name" value="7-CYANO-7-DEAZAGUANINE SYNTHASE"/>
    <property type="match status" value="1"/>
</dbReference>
<dbReference type="Pfam" id="PF06508">
    <property type="entry name" value="QueC"/>
    <property type="match status" value="1"/>
</dbReference>
<dbReference type="PIRSF" id="PIRSF006293">
    <property type="entry name" value="ExsB"/>
    <property type="match status" value="1"/>
</dbReference>
<dbReference type="SUPFAM" id="SSF52402">
    <property type="entry name" value="Adenine nucleotide alpha hydrolases-like"/>
    <property type="match status" value="1"/>
</dbReference>
<name>QUEC_ACAM1</name>
<keyword id="KW-0067">ATP-binding</keyword>
<keyword id="KW-0436">Ligase</keyword>
<keyword id="KW-0479">Metal-binding</keyword>
<keyword id="KW-0547">Nucleotide-binding</keyword>
<keyword id="KW-0671">Queuosine biosynthesis</keyword>
<keyword id="KW-1185">Reference proteome</keyword>
<keyword id="KW-0862">Zinc</keyword>
<sequence length="228" mass="24735">MKAVVLLSGGLDSSTALYKAKADGADCYAISFDYRQRHRQELDSAVAIAQSAQVTQHQIVAFDLTLWGGSALTDTQIDLPSRSIEEMADHIPVTYVPARNSIFLSFALAYAETISAEQVYIGVNQLDYSGYPDCRPDFIQAMQEVFRLGTKLGREGQAIEICTPLINLHKSAIIELGNDLGVPWEQTWSCYSDGGGSPPLACGQCDSCQLRLAAFAQLGLSDPLSYAT</sequence>
<accession>B0C253</accession>
<proteinExistence type="inferred from homology"/>